<organism>
    <name type="scientific">Xanthomonas oryzae pv. oryzae (strain MAFF 311018)</name>
    <dbReference type="NCBI Taxonomy" id="342109"/>
    <lineage>
        <taxon>Bacteria</taxon>
        <taxon>Pseudomonadati</taxon>
        <taxon>Pseudomonadota</taxon>
        <taxon>Gammaproteobacteria</taxon>
        <taxon>Lysobacterales</taxon>
        <taxon>Lysobacteraceae</taxon>
        <taxon>Xanthomonas</taxon>
    </lineage>
</organism>
<protein>
    <recommendedName>
        <fullName evidence="1">Alanine--tRNA ligase</fullName>
        <ecNumber evidence="1">6.1.1.7</ecNumber>
    </recommendedName>
    <alternativeName>
        <fullName evidence="1">Alanyl-tRNA synthetase</fullName>
        <shortName evidence="1">AlaRS</shortName>
    </alternativeName>
</protein>
<proteinExistence type="inferred from homology"/>
<gene>
    <name evidence="1" type="primary">alaS</name>
    <name type="ordered locus">XOO2791</name>
</gene>
<dbReference type="EC" id="6.1.1.7" evidence="1"/>
<dbReference type="EMBL" id="AP008229">
    <property type="protein sequence ID" value="BAE69546.1"/>
    <property type="molecule type" value="Genomic_DNA"/>
</dbReference>
<dbReference type="RefSeq" id="WP_011259507.1">
    <property type="nucleotide sequence ID" value="NC_007705.1"/>
</dbReference>
<dbReference type="SMR" id="Q2P1N1"/>
<dbReference type="KEGG" id="xom:XOO2791"/>
<dbReference type="HOGENOM" id="CLU_004485_1_1_6"/>
<dbReference type="GO" id="GO:0005829">
    <property type="term" value="C:cytosol"/>
    <property type="evidence" value="ECO:0007669"/>
    <property type="project" value="TreeGrafter"/>
</dbReference>
<dbReference type="GO" id="GO:0004813">
    <property type="term" value="F:alanine-tRNA ligase activity"/>
    <property type="evidence" value="ECO:0007669"/>
    <property type="project" value="UniProtKB-UniRule"/>
</dbReference>
<dbReference type="GO" id="GO:0002161">
    <property type="term" value="F:aminoacyl-tRNA deacylase activity"/>
    <property type="evidence" value="ECO:0007669"/>
    <property type="project" value="TreeGrafter"/>
</dbReference>
<dbReference type="GO" id="GO:0005524">
    <property type="term" value="F:ATP binding"/>
    <property type="evidence" value="ECO:0007669"/>
    <property type="project" value="UniProtKB-UniRule"/>
</dbReference>
<dbReference type="GO" id="GO:0000049">
    <property type="term" value="F:tRNA binding"/>
    <property type="evidence" value="ECO:0007669"/>
    <property type="project" value="UniProtKB-KW"/>
</dbReference>
<dbReference type="GO" id="GO:0008270">
    <property type="term" value="F:zinc ion binding"/>
    <property type="evidence" value="ECO:0007669"/>
    <property type="project" value="UniProtKB-UniRule"/>
</dbReference>
<dbReference type="GO" id="GO:0006419">
    <property type="term" value="P:alanyl-tRNA aminoacylation"/>
    <property type="evidence" value="ECO:0007669"/>
    <property type="project" value="UniProtKB-UniRule"/>
</dbReference>
<dbReference type="GO" id="GO:0045892">
    <property type="term" value="P:negative regulation of DNA-templated transcription"/>
    <property type="evidence" value="ECO:0007669"/>
    <property type="project" value="TreeGrafter"/>
</dbReference>
<dbReference type="CDD" id="cd00673">
    <property type="entry name" value="AlaRS_core"/>
    <property type="match status" value="1"/>
</dbReference>
<dbReference type="FunFam" id="3.10.310.40:FF:000001">
    <property type="entry name" value="Alanine--tRNA ligase"/>
    <property type="match status" value="1"/>
</dbReference>
<dbReference type="FunFam" id="3.30.54.20:FF:000001">
    <property type="entry name" value="Alanine--tRNA ligase"/>
    <property type="match status" value="1"/>
</dbReference>
<dbReference type="FunFam" id="3.30.930.10:FF:000004">
    <property type="entry name" value="Alanine--tRNA ligase"/>
    <property type="match status" value="1"/>
</dbReference>
<dbReference type="FunFam" id="3.30.980.10:FF:000004">
    <property type="entry name" value="Alanine--tRNA ligase, cytoplasmic"/>
    <property type="match status" value="1"/>
</dbReference>
<dbReference type="Gene3D" id="2.40.30.130">
    <property type="match status" value="1"/>
</dbReference>
<dbReference type="Gene3D" id="3.10.310.40">
    <property type="match status" value="1"/>
</dbReference>
<dbReference type="Gene3D" id="3.30.54.20">
    <property type="match status" value="1"/>
</dbReference>
<dbReference type="Gene3D" id="6.10.250.550">
    <property type="match status" value="1"/>
</dbReference>
<dbReference type="Gene3D" id="3.30.930.10">
    <property type="entry name" value="Bira Bifunctional Protein, Domain 2"/>
    <property type="match status" value="1"/>
</dbReference>
<dbReference type="Gene3D" id="3.30.980.10">
    <property type="entry name" value="Threonyl-trna Synthetase, Chain A, domain 2"/>
    <property type="match status" value="1"/>
</dbReference>
<dbReference type="HAMAP" id="MF_00036_B">
    <property type="entry name" value="Ala_tRNA_synth_B"/>
    <property type="match status" value="1"/>
</dbReference>
<dbReference type="InterPro" id="IPR045864">
    <property type="entry name" value="aa-tRNA-synth_II/BPL/LPL"/>
</dbReference>
<dbReference type="InterPro" id="IPR002318">
    <property type="entry name" value="Ala-tRNA-lgiase_IIc"/>
</dbReference>
<dbReference type="InterPro" id="IPR018162">
    <property type="entry name" value="Ala-tRNA-ligase_IIc_anticod-bd"/>
</dbReference>
<dbReference type="InterPro" id="IPR018165">
    <property type="entry name" value="Ala-tRNA-synth_IIc_core"/>
</dbReference>
<dbReference type="InterPro" id="IPR018164">
    <property type="entry name" value="Ala-tRNA-synth_IIc_N"/>
</dbReference>
<dbReference type="InterPro" id="IPR050058">
    <property type="entry name" value="Ala-tRNA_ligase"/>
</dbReference>
<dbReference type="InterPro" id="IPR023033">
    <property type="entry name" value="Ala_tRNA_ligase_euk/bac"/>
</dbReference>
<dbReference type="InterPro" id="IPR003156">
    <property type="entry name" value="DHHA1_dom"/>
</dbReference>
<dbReference type="InterPro" id="IPR018163">
    <property type="entry name" value="Thr/Ala-tRNA-synth_IIc_edit"/>
</dbReference>
<dbReference type="InterPro" id="IPR009000">
    <property type="entry name" value="Transl_B-barrel_sf"/>
</dbReference>
<dbReference type="InterPro" id="IPR012947">
    <property type="entry name" value="tRNA_SAD"/>
</dbReference>
<dbReference type="NCBIfam" id="TIGR00344">
    <property type="entry name" value="alaS"/>
    <property type="match status" value="1"/>
</dbReference>
<dbReference type="PANTHER" id="PTHR11777:SF9">
    <property type="entry name" value="ALANINE--TRNA LIGASE, CYTOPLASMIC"/>
    <property type="match status" value="1"/>
</dbReference>
<dbReference type="PANTHER" id="PTHR11777">
    <property type="entry name" value="ALANYL-TRNA SYNTHETASE"/>
    <property type="match status" value="1"/>
</dbReference>
<dbReference type="Pfam" id="PF02272">
    <property type="entry name" value="DHHA1"/>
    <property type="match status" value="1"/>
</dbReference>
<dbReference type="Pfam" id="PF01411">
    <property type="entry name" value="tRNA-synt_2c"/>
    <property type="match status" value="1"/>
</dbReference>
<dbReference type="Pfam" id="PF07973">
    <property type="entry name" value="tRNA_SAD"/>
    <property type="match status" value="1"/>
</dbReference>
<dbReference type="PRINTS" id="PR00980">
    <property type="entry name" value="TRNASYNTHALA"/>
</dbReference>
<dbReference type="SMART" id="SM00863">
    <property type="entry name" value="tRNA_SAD"/>
    <property type="match status" value="1"/>
</dbReference>
<dbReference type="SUPFAM" id="SSF55681">
    <property type="entry name" value="Class II aaRS and biotin synthetases"/>
    <property type="match status" value="1"/>
</dbReference>
<dbReference type="SUPFAM" id="SSF101353">
    <property type="entry name" value="Putative anticodon-binding domain of alanyl-tRNA synthetase (AlaRS)"/>
    <property type="match status" value="1"/>
</dbReference>
<dbReference type="SUPFAM" id="SSF55186">
    <property type="entry name" value="ThrRS/AlaRS common domain"/>
    <property type="match status" value="1"/>
</dbReference>
<dbReference type="SUPFAM" id="SSF50447">
    <property type="entry name" value="Translation proteins"/>
    <property type="match status" value="1"/>
</dbReference>
<dbReference type="PROSITE" id="PS50860">
    <property type="entry name" value="AA_TRNA_LIGASE_II_ALA"/>
    <property type="match status" value="1"/>
</dbReference>
<comment type="function">
    <text evidence="1">Catalyzes the attachment of alanine to tRNA(Ala) in a two-step reaction: alanine is first activated by ATP to form Ala-AMP and then transferred to the acceptor end of tRNA(Ala). Also edits incorrectly charged Ser-tRNA(Ala) and Gly-tRNA(Ala) via its editing domain.</text>
</comment>
<comment type="catalytic activity">
    <reaction evidence="1">
        <text>tRNA(Ala) + L-alanine + ATP = L-alanyl-tRNA(Ala) + AMP + diphosphate</text>
        <dbReference type="Rhea" id="RHEA:12540"/>
        <dbReference type="Rhea" id="RHEA-COMP:9657"/>
        <dbReference type="Rhea" id="RHEA-COMP:9923"/>
        <dbReference type="ChEBI" id="CHEBI:30616"/>
        <dbReference type="ChEBI" id="CHEBI:33019"/>
        <dbReference type="ChEBI" id="CHEBI:57972"/>
        <dbReference type="ChEBI" id="CHEBI:78442"/>
        <dbReference type="ChEBI" id="CHEBI:78497"/>
        <dbReference type="ChEBI" id="CHEBI:456215"/>
        <dbReference type="EC" id="6.1.1.7"/>
    </reaction>
</comment>
<comment type="cofactor">
    <cofactor evidence="1">
        <name>Zn(2+)</name>
        <dbReference type="ChEBI" id="CHEBI:29105"/>
    </cofactor>
    <text evidence="1">Binds 1 zinc ion per subunit.</text>
</comment>
<comment type="subcellular location">
    <subcellularLocation>
        <location evidence="1">Cytoplasm</location>
    </subcellularLocation>
</comment>
<comment type="domain">
    <text evidence="1">Consists of three domains; the N-terminal catalytic domain, the editing domain and the C-terminal C-Ala domain. The editing domain removes incorrectly charged amino acids, while the C-Ala domain, along with tRNA(Ala), serves as a bridge to cooperatively bring together the editing and aminoacylation centers thus stimulating deacylation of misacylated tRNAs.</text>
</comment>
<comment type="similarity">
    <text evidence="1">Belongs to the class-II aminoacyl-tRNA synthetase family.</text>
</comment>
<name>SYA_XANOM</name>
<reference key="1">
    <citation type="journal article" date="2005" name="Jpn. Agric. Res. Q.">
        <title>Genome sequence of Xanthomonas oryzae pv. oryzae suggests contribution of large numbers of effector genes and insertion sequences to its race diversity.</title>
        <authorList>
            <person name="Ochiai H."/>
            <person name="Inoue Y."/>
            <person name="Takeya M."/>
            <person name="Sasaki A."/>
            <person name="Kaku H."/>
        </authorList>
    </citation>
    <scope>NUCLEOTIDE SEQUENCE [LARGE SCALE GENOMIC DNA]</scope>
    <source>
        <strain>MAFF 311018</strain>
    </source>
</reference>
<sequence>MNAPAKFSTSQIRSDFLAFFEGRGHTIVPSAPLVPGNDPTLLFTNSGMVQFKDVFLGAEKRSYVRAADVQRCLRAGGKHNDLDSVGYTARHHTFFEMLGNWSFGDYFKKDAIAWAWELLTQIWKLPTDRLLVTVYHTDEEAFALWRDMIGIPESRIVRIGDNKGAPYASDNFWQMADTGPCGPCTEIFFDHGDHIAGGPPGSPDEDGDRFIEIWNLVFMQFDRQPDGTLVPLPAPCVDTGMGLERLAAILQHVHTNYEIDLFQALIGKASALTGITDLENKSLRVIADHIRACSFLIVDGVLPSNEGRGYVLRRIIRRALRHGWMLGVRQPFFSKMVPTLVELMGEAYPELVVAKDTVARALLAEEERFAETLDAGMKIFDEVASRSQDIIPGADAFRLYDTYGFPVDLTADIARERGMRVDMEGFECAMERQRETARAAGKFGGGVALPADLVASMSPTVFLGYEAYDADALRVVALLKQGRPVERAQAGDEVIVFTDRTPFYAESGGQVGDSGQLNGPGVLIEVADTQKFAGQFHGHVGRISEGTLALGDVLAGGIDVQRRGKTILNHSATHLLHAALREVLGTHVQQKGSLVAPDRLRFDFSHFQPITADELAVIERKVNAEVRTNHGVEVHNMAMQEALDFGAMALFGEKYGENVRVLKMGGYSTELCGGTHVTRTGDIGLFKITSEGGVSSGVRRIEAVTGQGALDYVADEERRLLEAAHLLGGNATEVVDKVRALTERQKRLQRELESLKAKLASGATADLGAAAIDVAGVKVVAVRLEGFDAKALRDAMDRLKQQLGDSVIVLAGASGGKVALVSGVNGSPTGKVKAGELLSNIASQIGGKGGGRPDLAQGGGEDGPALATALDGVPLWVKQHLG</sequence>
<accession>Q2P1N1</accession>
<evidence type="ECO:0000255" key="1">
    <source>
        <dbReference type="HAMAP-Rule" id="MF_00036"/>
    </source>
</evidence>
<feature type="chain" id="PRO_0000347865" description="Alanine--tRNA ligase">
    <location>
        <begin position="1"/>
        <end position="882"/>
    </location>
</feature>
<feature type="binding site" evidence="1">
    <location>
        <position position="570"/>
    </location>
    <ligand>
        <name>Zn(2+)</name>
        <dbReference type="ChEBI" id="CHEBI:29105"/>
    </ligand>
</feature>
<feature type="binding site" evidence="1">
    <location>
        <position position="574"/>
    </location>
    <ligand>
        <name>Zn(2+)</name>
        <dbReference type="ChEBI" id="CHEBI:29105"/>
    </ligand>
</feature>
<feature type="binding site" evidence="1">
    <location>
        <position position="672"/>
    </location>
    <ligand>
        <name>Zn(2+)</name>
        <dbReference type="ChEBI" id="CHEBI:29105"/>
    </ligand>
</feature>
<feature type="binding site" evidence="1">
    <location>
        <position position="676"/>
    </location>
    <ligand>
        <name>Zn(2+)</name>
        <dbReference type="ChEBI" id="CHEBI:29105"/>
    </ligand>
</feature>
<keyword id="KW-0030">Aminoacyl-tRNA synthetase</keyword>
<keyword id="KW-0067">ATP-binding</keyword>
<keyword id="KW-0963">Cytoplasm</keyword>
<keyword id="KW-0436">Ligase</keyword>
<keyword id="KW-0479">Metal-binding</keyword>
<keyword id="KW-0547">Nucleotide-binding</keyword>
<keyword id="KW-0648">Protein biosynthesis</keyword>
<keyword id="KW-0694">RNA-binding</keyword>
<keyword id="KW-0820">tRNA-binding</keyword>
<keyword id="KW-0862">Zinc</keyword>